<comment type="function">
    <text evidence="1">This is one of the proteins that bind and probably mediate the attachment of the 5S RNA into the large ribosomal subunit, where it forms part of the central protuberance.</text>
</comment>
<comment type="subunit">
    <text evidence="1">Part of the 50S ribosomal subunit; part of the 5S rRNA/L5/L18/L25 subcomplex. Contacts the 5S and 23S rRNAs.</text>
</comment>
<comment type="similarity">
    <text evidence="1">Belongs to the universal ribosomal protein uL18 family.</text>
</comment>
<gene>
    <name evidence="1" type="primary">rplR</name>
    <name type="ordered locus">Bfl207</name>
</gene>
<sequence length="117" mass="13279">MNKKLLRARRALKLRKKLYLLGSVRLVVYRSLRHMYAQIVSEDNCNVLVAASTTEKLIASKLRVTGNKEAAAVVGQVIAERAFKKGIVHVSFDRSGFKYHGRVQILAEYARQFGLKF</sequence>
<evidence type="ECO:0000255" key="1">
    <source>
        <dbReference type="HAMAP-Rule" id="MF_01337"/>
    </source>
</evidence>
<evidence type="ECO:0000305" key="2"/>
<keyword id="KW-1185">Reference proteome</keyword>
<keyword id="KW-0687">Ribonucleoprotein</keyword>
<keyword id="KW-0689">Ribosomal protein</keyword>
<keyword id="KW-0694">RNA-binding</keyword>
<keyword id="KW-0699">rRNA-binding</keyword>
<accession>Q7VQD2</accession>
<protein>
    <recommendedName>
        <fullName evidence="1">Large ribosomal subunit protein uL18</fullName>
    </recommendedName>
    <alternativeName>
        <fullName evidence="2">50S ribosomal protein L18</fullName>
    </alternativeName>
</protein>
<dbReference type="EMBL" id="BX248583">
    <property type="protein sequence ID" value="CAD83722.1"/>
    <property type="molecule type" value="Genomic_DNA"/>
</dbReference>
<dbReference type="SMR" id="Q7VQD2"/>
<dbReference type="STRING" id="203907.Bfl207"/>
<dbReference type="KEGG" id="bfl:Bfl207"/>
<dbReference type="eggNOG" id="COG0256">
    <property type="taxonomic scope" value="Bacteria"/>
</dbReference>
<dbReference type="HOGENOM" id="CLU_098841_0_1_6"/>
<dbReference type="OrthoDB" id="9810939at2"/>
<dbReference type="Proteomes" id="UP000002192">
    <property type="component" value="Chromosome"/>
</dbReference>
<dbReference type="GO" id="GO:0022625">
    <property type="term" value="C:cytosolic large ribosomal subunit"/>
    <property type="evidence" value="ECO:0007669"/>
    <property type="project" value="TreeGrafter"/>
</dbReference>
<dbReference type="GO" id="GO:0008097">
    <property type="term" value="F:5S rRNA binding"/>
    <property type="evidence" value="ECO:0007669"/>
    <property type="project" value="TreeGrafter"/>
</dbReference>
<dbReference type="GO" id="GO:0003735">
    <property type="term" value="F:structural constituent of ribosome"/>
    <property type="evidence" value="ECO:0007669"/>
    <property type="project" value="InterPro"/>
</dbReference>
<dbReference type="GO" id="GO:0006412">
    <property type="term" value="P:translation"/>
    <property type="evidence" value="ECO:0007669"/>
    <property type="project" value="UniProtKB-UniRule"/>
</dbReference>
<dbReference type="CDD" id="cd00432">
    <property type="entry name" value="Ribosomal_L18_L5e"/>
    <property type="match status" value="1"/>
</dbReference>
<dbReference type="FunFam" id="3.30.420.100:FF:000001">
    <property type="entry name" value="50S ribosomal protein L18"/>
    <property type="match status" value="1"/>
</dbReference>
<dbReference type="Gene3D" id="3.30.420.100">
    <property type="match status" value="1"/>
</dbReference>
<dbReference type="HAMAP" id="MF_01337_B">
    <property type="entry name" value="Ribosomal_uL18_B"/>
    <property type="match status" value="1"/>
</dbReference>
<dbReference type="InterPro" id="IPR004389">
    <property type="entry name" value="Ribosomal_uL18_bac-type"/>
</dbReference>
<dbReference type="InterPro" id="IPR005484">
    <property type="entry name" value="Ribosomal_uL18_bac/euk"/>
</dbReference>
<dbReference type="NCBIfam" id="TIGR00060">
    <property type="entry name" value="L18_bact"/>
    <property type="match status" value="1"/>
</dbReference>
<dbReference type="PANTHER" id="PTHR12899">
    <property type="entry name" value="39S RIBOSOMAL PROTEIN L18, MITOCHONDRIAL"/>
    <property type="match status" value="1"/>
</dbReference>
<dbReference type="PANTHER" id="PTHR12899:SF3">
    <property type="entry name" value="LARGE RIBOSOMAL SUBUNIT PROTEIN UL18M"/>
    <property type="match status" value="1"/>
</dbReference>
<dbReference type="Pfam" id="PF00861">
    <property type="entry name" value="Ribosomal_L18p"/>
    <property type="match status" value="1"/>
</dbReference>
<dbReference type="SUPFAM" id="SSF53137">
    <property type="entry name" value="Translational machinery components"/>
    <property type="match status" value="1"/>
</dbReference>
<organism>
    <name type="scientific">Blochmanniella floridana</name>
    <dbReference type="NCBI Taxonomy" id="203907"/>
    <lineage>
        <taxon>Bacteria</taxon>
        <taxon>Pseudomonadati</taxon>
        <taxon>Pseudomonadota</taxon>
        <taxon>Gammaproteobacteria</taxon>
        <taxon>Enterobacterales</taxon>
        <taxon>Enterobacteriaceae</taxon>
        <taxon>ant endosymbionts</taxon>
        <taxon>Candidatus Blochmanniella</taxon>
    </lineage>
</organism>
<proteinExistence type="inferred from homology"/>
<feature type="chain" id="PRO_0000131239" description="Large ribosomal subunit protein uL18">
    <location>
        <begin position="1"/>
        <end position="117"/>
    </location>
</feature>
<name>RL18_BLOFL</name>
<reference key="1">
    <citation type="journal article" date="2003" name="Proc. Natl. Acad. Sci. U.S.A.">
        <title>The genome sequence of Blochmannia floridanus: comparative analysis of reduced genomes.</title>
        <authorList>
            <person name="Gil R."/>
            <person name="Silva F.J."/>
            <person name="Zientz E."/>
            <person name="Delmotte F."/>
            <person name="Gonzalez-Candelas F."/>
            <person name="Latorre A."/>
            <person name="Rausell C."/>
            <person name="Kamerbeek J."/>
            <person name="Gadau J."/>
            <person name="Hoelldobler B."/>
            <person name="van Ham R.C.H.J."/>
            <person name="Gross R."/>
            <person name="Moya A."/>
        </authorList>
    </citation>
    <scope>NUCLEOTIDE SEQUENCE [LARGE SCALE GENOMIC DNA]</scope>
</reference>